<protein>
    <recommendedName>
        <fullName evidence="10">N-fatty-acyl-amino acid synthase/hydrolase PM20D1</fullName>
        <ecNumber evidence="6">3.5.1.114</ecNumber>
        <ecNumber evidence="6">3.5.1.14</ecNumber>
    </recommendedName>
    <alternativeName>
        <fullName evidence="11">Peptidase M20 domain-containing protein 1</fullName>
    </alternativeName>
</protein>
<gene>
    <name evidence="11" type="primary">PM20D1</name>
</gene>
<evidence type="ECO:0000250" key="1"/>
<evidence type="ECO:0000250" key="2">
    <source>
        <dbReference type="UniProtKB" id="Q8C165"/>
    </source>
</evidence>
<evidence type="ECO:0000255" key="3"/>
<evidence type="ECO:0000269" key="4">
    <source>
    </source>
</evidence>
<evidence type="ECO:0000269" key="5">
    <source>
    </source>
</evidence>
<evidence type="ECO:0000269" key="6">
    <source>
    </source>
</evidence>
<evidence type="ECO:0000269" key="7">
    <source>
    </source>
</evidence>
<evidence type="ECO:0000303" key="8">
    <source>
    </source>
</evidence>
<evidence type="ECO:0000305" key="9"/>
<evidence type="ECO:0000305" key="10">
    <source>
    </source>
</evidence>
<evidence type="ECO:0000312" key="11">
    <source>
        <dbReference type="HGNC" id="HGNC:26518"/>
    </source>
</evidence>
<proteinExistence type="evidence at protein level"/>
<organism>
    <name type="scientific">Homo sapiens</name>
    <name type="common">Human</name>
    <dbReference type="NCBI Taxonomy" id="9606"/>
    <lineage>
        <taxon>Eukaryota</taxon>
        <taxon>Metazoa</taxon>
        <taxon>Chordata</taxon>
        <taxon>Craniata</taxon>
        <taxon>Vertebrata</taxon>
        <taxon>Euteleostomi</taxon>
        <taxon>Mammalia</taxon>
        <taxon>Eutheria</taxon>
        <taxon>Euarchontoglires</taxon>
        <taxon>Primates</taxon>
        <taxon>Haplorrhini</taxon>
        <taxon>Catarrhini</taxon>
        <taxon>Hominidae</taxon>
        <taxon>Homo</taxon>
    </lineage>
</organism>
<name>P20D1_HUMAN</name>
<dbReference type="EC" id="3.5.1.114" evidence="6"/>
<dbReference type="EC" id="3.5.1.14" evidence="6"/>
<dbReference type="EMBL" id="AK057131">
    <property type="protein sequence ID" value="BAB71368.1"/>
    <property type="molecule type" value="mRNA"/>
</dbReference>
<dbReference type="EMBL" id="AK290786">
    <property type="protein sequence ID" value="BAF83475.1"/>
    <property type="molecule type" value="mRNA"/>
</dbReference>
<dbReference type="EMBL" id="AC119673">
    <property type="status" value="NOT_ANNOTATED_CDS"/>
    <property type="molecule type" value="Genomic_DNA"/>
</dbReference>
<dbReference type="EMBL" id="BC039170">
    <property type="protein sequence ID" value="AAH39170.1"/>
    <property type="molecule type" value="mRNA"/>
</dbReference>
<dbReference type="EMBL" id="BC063477">
    <property type="protein sequence ID" value="AAH63477.1"/>
    <property type="molecule type" value="mRNA"/>
</dbReference>
<dbReference type="CCDS" id="CCDS1460.1">
    <molecule id="Q6GTS8-1"/>
</dbReference>
<dbReference type="RefSeq" id="NP_689704.4">
    <molecule id="Q6GTS8-1"/>
    <property type="nucleotide sequence ID" value="NM_152491.4"/>
</dbReference>
<dbReference type="SMR" id="Q6GTS8"/>
<dbReference type="BioGRID" id="127171">
    <property type="interactions" value="23"/>
</dbReference>
<dbReference type="FunCoup" id="Q6GTS8">
    <property type="interactions" value="68"/>
</dbReference>
<dbReference type="IntAct" id="Q6GTS8">
    <property type="interactions" value="10"/>
</dbReference>
<dbReference type="STRING" id="9606.ENSP00000356104"/>
<dbReference type="SwissLipids" id="SLP:000001665"/>
<dbReference type="MEROPS" id="M20.011"/>
<dbReference type="GlyCosmos" id="Q6GTS8">
    <property type="glycosylation" value="1 site, No reported glycans"/>
</dbReference>
<dbReference type="GlyGen" id="Q6GTS8">
    <property type="glycosylation" value="4 sites, 1 N-linked glycan (1 site)"/>
</dbReference>
<dbReference type="iPTMnet" id="Q6GTS8"/>
<dbReference type="PhosphoSitePlus" id="Q6GTS8"/>
<dbReference type="BioMuta" id="PM20D1"/>
<dbReference type="DMDM" id="317373406"/>
<dbReference type="MassIVE" id="Q6GTS8"/>
<dbReference type="PaxDb" id="9606-ENSP00000356104"/>
<dbReference type="PeptideAtlas" id="Q6GTS8"/>
<dbReference type="ProteomicsDB" id="66320">
    <molecule id="Q6GTS8-1"/>
</dbReference>
<dbReference type="ProteomicsDB" id="66321">
    <molecule id="Q6GTS8-2"/>
</dbReference>
<dbReference type="Antibodypedia" id="2556">
    <property type="antibodies" value="26 antibodies from 12 providers"/>
</dbReference>
<dbReference type="DNASU" id="148811"/>
<dbReference type="Ensembl" id="ENST00000367136.5">
    <molecule id="Q6GTS8-1"/>
    <property type="protein sequence ID" value="ENSP00000356104.4"/>
    <property type="gene ID" value="ENSG00000162877.13"/>
</dbReference>
<dbReference type="GeneID" id="148811"/>
<dbReference type="KEGG" id="hsa:148811"/>
<dbReference type="MANE-Select" id="ENST00000367136.5">
    <property type="protein sequence ID" value="ENSP00000356104.4"/>
    <property type="RefSeq nucleotide sequence ID" value="NM_152491.5"/>
    <property type="RefSeq protein sequence ID" value="NP_689704.4"/>
</dbReference>
<dbReference type="UCSC" id="uc001hdj.4">
    <molecule id="Q6GTS8-1"/>
    <property type="organism name" value="human"/>
</dbReference>
<dbReference type="AGR" id="HGNC:26518"/>
<dbReference type="CTD" id="148811"/>
<dbReference type="DisGeNET" id="148811"/>
<dbReference type="GeneCards" id="PM20D1"/>
<dbReference type="HGNC" id="HGNC:26518">
    <property type="gene designation" value="PM20D1"/>
</dbReference>
<dbReference type="HPA" id="ENSG00000162877">
    <property type="expression patterns" value="Group enriched (pancreas, skin)"/>
</dbReference>
<dbReference type="MIM" id="617124">
    <property type="type" value="gene"/>
</dbReference>
<dbReference type="neXtProt" id="NX_Q6GTS8"/>
<dbReference type="OpenTargets" id="ENSG00000162877"/>
<dbReference type="PharmGKB" id="PA162399772"/>
<dbReference type="VEuPathDB" id="HostDB:ENSG00000162877"/>
<dbReference type="eggNOG" id="KOG2275">
    <property type="taxonomic scope" value="Eukaryota"/>
</dbReference>
<dbReference type="GeneTree" id="ENSGT00940000156659"/>
<dbReference type="HOGENOM" id="CLU_021802_11_1_1"/>
<dbReference type="InParanoid" id="Q6GTS8"/>
<dbReference type="OMA" id="DWTHHPF"/>
<dbReference type="OrthoDB" id="3064516at2759"/>
<dbReference type="PAN-GO" id="Q6GTS8">
    <property type="GO annotations" value="5 GO annotations based on evolutionary models"/>
</dbReference>
<dbReference type="PhylomeDB" id="Q6GTS8"/>
<dbReference type="TreeFam" id="TF328688"/>
<dbReference type="PathwayCommons" id="Q6GTS8"/>
<dbReference type="Reactome" id="R-HSA-9673163">
    <property type="pathway name" value="Oleoyl-phe metabolism"/>
</dbReference>
<dbReference type="SignaLink" id="Q6GTS8"/>
<dbReference type="UniPathway" id="UPA00199"/>
<dbReference type="BioGRID-ORCS" id="148811">
    <property type="hits" value="11 hits in 1142 CRISPR screens"/>
</dbReference>
<dbReference type="ChiTaRS" id="PM20D1">
    <property type="organism name" value="human"/>
</dbReference>
<dbReference type="GenomeRNAi" id="148811"/>
<dbReference type="Pharos" id="Q6GTS8">
    <property type="development level" value="Tdark"/>
</dbReference>
<dbReference type="PRO" id="PR:Q6GTS8"/>
<dbReference type="Proteomes" id="UP000005640">
    <property type="component" value="Chromosome 1"/>
</dbReference>
<dbReference type="RNAct" id="Q6GTS8">
    <property type="molecule type" value="protein"/>
</dbReference>
<dbReference type="Bgee" id="ENSG00000162877">
    <property type="expression patterns" value="Expressed in upper leg skin and 95 other cell types or tissues"/>
</dbReference>
<dbReference type="GO" id="GO:0070062">
    <property type="term" value="C:extracellular exosome"/>
    <property type="evidence" value="ECO:0007005"/>
    <property type="project" value="UniProtKB"/>
</dbReference>
<dbReference type="GO" id="GO:0005576">
    <property type="term" value="C:extracellular region"/>
    <property type="evidence" value="ECO:0000304"/>
    <property type="project" value="Reactome"/>
</dbReference>
<dbReference type="GO" id="GO:0004046">
    <property type="term" value="F:aminoacylase activity"/>
    <property type="evidence" value="ECO:0007669"/>
    <property type="project" value="UniProtKB-EC"/>
</dbReference>
<dbReference type="GO" id="GO:0016811">
    <property type="term" value="F:hydrolase activity, acting on carbon-nitrogen (but not peptide) bonds, in linear amides"/>
    <property type="evidence" value="ECO:0000269"/>
    <property type="project" value="Reactome"/>
</dbReference>
<dbReference type="GO" id="GO:0016829">
    <property type="term" value="F:lyase activity"/>
    <property type="evidence" value="ECO:0007669"/>
    <property type="project" value="UniProtKB-KW"/>
</dbReference>
<dbReference type="GO" id="GO:0046872">
    <property type="term" value="F:metal ion binding"/>
    <property type="evidence" value="ECO:0007669"/>
    <property type="project" value="UniProtKB-KW"/>
</dbReference>
<dbReference type="GO" id="GO:0008233">
    <property type="term" value="F:peptidase activity"/>
    <property type="evidence" value="ECO:0007669"/>
    <property type="project" value="UniProtKB-KW"/>
</dbReference>
<dbReference type="GO" id="GO:1990845">
    <property type="term" value="P:adaptive thermogenesis"/>
    <property type="evidence" value="ECO:0000304"/>
    <property type="project" value="Reactome"/>
</dbReference>
<dbReference type="GO" id="GO:0043604">
    <property type="term" value="P:amide biosynthetic process"/>
    <property type="evidence" value="ECO:0000314"/>
    <property type="project" value="UniProtKB"/>
</dbReference>
<dbReference type="GO" id="GO:0043605">
    <property type="term" value="P:amide catabolic process"/>
    <property type="evidence" value="ECO:0000314"/>
    <property type="project" value="UniProtKB"/>
</dbReference>
<dbReference type="GO" id="GO:0006520">
    <property type="term" value="P:amino acid metabolic process"/>
    <property type="evidence" value="ECO:0000314"/>
    <property type="project" value="UniProtKB"/>
</dbReference>
<dbReference type="GO" id="GO:0097009">
    <property type="term" value="P:energy homeostasis"/>
    <property type="evidence" value="ECO:0007669"/>
    <property type="project" value="Ensembl"/>
</dbReference>
<dbReference type="GO" id="GO:0006631">
    <property type="term" value="P:fatty acid metabolic process"/>
    <property type="evidence" value="ECO:0007669"/>
    <property type="project" value="UniProtKB-UniPathway"/>
</dbReference>
<dbReference type="GO" id="GO:0006629">
    <property type="term" value="P:lipid metabolic process"/>
    <property type="evidence" value="ECO:0000314"/>
    <property type="project" value="UniProtKB"/>
</dbReference>
<dbReference type="GO" id="GO:0006508">
    <property type="term" value="P:proteolysis"/>
    <property type="evidence" value="ECO:0007669"/>
    <property type="project" value="UniProtKB-KW"/>
</dbReference>
<dbReference type="CDD" id="cd05674">
    <property type="entry name" value="M20_yscS"/>
    <property type="match status" value="1"/>
</dbReference>
<dbReference type="FunFam" id="1.10.150.900:FF:000003">
    <property type="entry name" value="N-fatty-acyl-amino acid synthase/hydrolase PM20D1"/>
    <property type="match status" value="1"/>
</dbReference>
<dbReference type="FunFam" id="3.40.630.10:FF:000027">
    <property type="entry name" value="N-fatty-acyl-amino acid synthase/hydrolase PM20D1"/>
    <property type="match status" value="1"/>
</dbReference>
<dbReference type="Gene3D" id="1.10.150.900">
    <property type="match status" value="1"/>
</dbReference>
<dbReference type="Gene3D" id="3.30.70.360">
    <property type="match status" value="1"/>
</dbReference>
<dbReference type="Gene3D" id="3.40.630.10">
    <property type="entry name" value="Zn peptidases"/>
    <property type="match status" value="1"/>
</dbReference>
<dbReference type="InterPro" id="IPR036264">
    <property type="entry name" value="Bact_exopeptidase_dim_dom"/>
</dbReference>
<dbReference type="InterPro" id="IPR047177">
    <property type="entry name" value="Pept_M20A"/>
</dbReference>
<dbReference type="InterPro" id="IPR002933">
    <property type="entry name" value="Peptidase_M20"/>
</dbReference>
<dbReference type="InterPro" id="IPR011650">
    <property type="entry name" value="Peptidase_M20_dimer"/>
</dbReference>
<dbReference type="PANTHER" id="PTHR45962">
    <property type="entry name" value="N-FATTY-ACYL-AMINO ACID SYNTHASE/HYDROLASE PM20D1"/>
    <property type="match status" value="1"/>
</dbReference>
<dbReference type="PANTHER" id="PTHR45962:SF1">
    <property type="entry name" value="N-FATTY-ACYL-AMINO ACID SYNTHASE_HYDROLASE PM20D1"/>
    <property type="match status" value="1"/>
</dbReference>
<dbReference type="Pfam" id="PF07687">
    <property type="entry name" value="M20_dimer"/>
    <property type="match status" value="1"/>
</dbReference>
<dbReference type="Pfam" id="PF01546">
    <property type="entry name" value="Peptidase_M20"/>
    <property type="match status" value="1"/>
</dbReference>
<dbReference type="SUPFAM" id="SSF55031">
    <property type="entry name" value="Bacterial exopeptidase dimerisation domain"/>
    <property type="match status" value="1"/>
</dbReference>
<dbReference type="SUPFAM" id="SSF53187">
    <property type="entry name" value="Zn-dependent exopeptidases"/>
    <property type="match status" value="1"/>
</dbReference>
<keyword id="KW-0025">Alternative splicing</keyword>
<keyword id="KW-0325">Glycoprotein</keyword>
<keyword id="KW-0378">Hydrolase</keyword>
<keyword id="KW-0443">Lipid metabolism</keyword>
<keyword id="KW-0456">Lyase</keyword>
<keyword id="KW-0479">Metal-binding</keyword>
<keyword id="KW-0645">Protease</keyword>
<keyword id="KW-1267">Proteomics identification</keyword>
<keyword id="KW-1185">Reference proteome</keyword>
<keyword id="KW-0964">Secreted</keyword>
<keyword id="KW-0732">Signal</keyword>
<keyword id="KW-0862">Zinc</keyword>
<sequence>MAQRCVCVLALVAMLLLVFPTVSRSMGPRSGEHQRASRIPSQFSKEERVAMKEALKGAIQIPTVTFSSEKSNTTALAEFGKYIHKVFPTVVSTSFIQHEVVEEYSHLFTIQGSDPSLQPYLLMAHFDVVPAPEEGWEVPPFSGLERDGIIYGRGTLDDKNSVMALLQALELLLIRKYIPRRSFFISLGHDEESSGTGAQRISALLQSRGVQLAFIVDEGGFILDDFIPNFKKPIALIAVSEKGSMNLMLQVNMTSGHSSAPPKETSIGILAAAVSRLEQTPMPIIFGSGTVVTVLQQLANEFPFPVNIILSNPWLFEPLISRFMERNPLTNAIIRTTTALTIFKAGVKFNVIPPVAQATVNFRIHPGQTVQEVLELTKNIVADNRVQFHVLSAFDPLPVSPSDDKALGYQLLRQTVQSVFPEVNITAPVTSIGNTDSRFFTNLTTGIYRFYPIYIQPEDFKRIHGVNEKISVQAYETQVKFIFELIQNADTDQEPVSHLHKL</sequence>
<accession>Q6GTS8</accession>
<accession>Q6P4E3</accession>
<accession>Q96DM4</accession>
<comment type="function">
    <text evidence="2 6">Secreted enzyme that regulates the endogenous N-fatty acyl amino acid (NAAs) tissue and circulating levels by functioning as a bidirectional NAA synthase/hydrolase (PubMed:27374330). It condenses free fatty acids and free amino acids to generate NAAs and bidirectionally catalyzes the reverse hydrolysis reaction (PubMed:27374330). Some of these NAAs stimulate oxidative metabolism via mitochondrial uncoupling, increasing energy expenditure in a UPC1-independent manner. Thereby, this secreted protein may indirectly regulate whole body energy expenditure. PM20D1 circulates in tight association with both low- and high-density (LDL and HDL,respectively) lipoprotein particles (By similarity).</text>
</comment>
<comment type="catalytic activity">
    <reaction evidence="6">
        <text>an N-acyl-L-amino acid + H2O = an L-alpha-amino acid + a carboxylate</text>
        <dbReference type="Rhea" id="RHEA:15565"/>
        <dbReference type="ChEBI" id="CHEBI:15377"/>
        <dbReference type="ChEBI" id="CHEBI:29067"/>
        <dbReference type="ChEBI" id="CHEBI:59869"/>
        <dbReference type="ChEBI" id="CHEBI:59874"/>
        <dbReference type="EC" id="3.5.1.14"/>
    </reaction>
    <physiologicalReaction direction="left-to-right" evidence="6">
        <dbReference type="Rhea" id="RHEA:15566"/>
    </physiologicalReaction>
    <physiologicalReaction direction="right-to-left" evidence="6">
        <dbReference type="Rhea" id="RHEA:15567"/>
    </physiologicalReaction>
</comment>
<comment type="catalytic activity">
    <reaction evidence="6">
        <text>an N-acyl-aromatic L-alpha-amino acid + H2O = an aromatic L-alpha-amino acid + a carboxylate</text>
        <dbReference type="Rhea" id="RHEA:54184"/>
        <dbReference type="ChEBI" id="CHEBI:15377"/>
        <dbReference type="ChEBI" id="CHEBI:29067"/>
        <dbReference type="ChEBI" id="CHEBI:84824"/>
        <dbReference type="ChEBI" id="CHEBI:138093"/>
        <dbReference type="EC" id="3.5.1.114"/>
    </reaction>
    <physiologicalReaction direction="left-to-right" evidence="6">
        <dbReference type="Rhea" id="RHEA:54185"/>
    </physiologicalReaction>
    <physiologicalReaction direction="right-to-left" evidence="6">
        <dbReference type="Rhea" id="RHEA:54186"/>
    </physiologicalReaction>
</comment>
<comment type="catalytic activity">
    <reaction evidence="6">
        <text>L-phenylalanine + (9Z)-octadecenoate = N-(9Z-octadecenoyl)-L-phenylalanine + H2O</text>
        <dbReference type="Rhea" id="RHEA:51300"/>
        <dbReference type="ChEBI" id="CHEBI:15377"/>
        <dbReference type="ChEBI" id="CHEBI:30823"/>
        <dbReference type="ChEBI" id="CHEBI:58095"/>
        <dbReference type="ChEBI" id="CHEBI:134020"/>
    </reaction>
    <physiologicalReaction direction="left-to-right" evidence="6">
        <dbReference type="Rhea" id="RHEA:51301"/>
    </physiologicalReaction>
    <physiologicalReaction direction="right-to-left" evidence="6">
        <dbReference type="Rhea" id="RHEA:51302"/>
    </physiologicalReaction>
</comment>
<comment type="catalytic activity">
    <reaction evidence="6">
        <text>N-(9Z-octadecenoyl)-L-leucine + H2O = L-leucine + (9Z)-octadecenoate</text>
        <dbReference type="Rhea" id="RHEA:51360"/>
        <dbReference type="ChEBI" id="CHEBI:15377"/>
        <dbReference type="ChEBI" id="CHEBI:30823"/>
        <dbReference type="ChEBI" id="CHEBI:57427"/>
        <dbReference type="ChEBI" id="CHEBI:134035"/>
    </reaction>
    <physiologicalReaction direction="left-to-right" evidence="6">
        <dbReference type="Rhea" id="RHEA:51361"/>
    </physiologicalReaction>
    <physiologicalReaction direction="right-to-left" evidence="6">
        <dbReference type="Rhea" id="RHEA:51362"/>
    </physiologicalReaction>
</comment>
<comment type="catalytic activity">
    <reaction evidence="2">
        <text>N-(5Z,8Z,11Z,14Z)-eicosatetraenoyl-glycine + H2O = (5Z,8Z,11Z,14Z)-eicosatetraenoate + glycine</text>
        <dbReference type="Rhea" id="RHEA:64108"/>
        <dbReference type="ChEBI" id="CHEBI:15377"/>
        <dbReference type="ChEBI" id="CHEBI:32395"/>
        <dbReference type="ChEBI" id="CHEBI:57305"/>
        <dbReference type="ChEBI" id="CHEBI:59002"/>
    </reaction>
    <physiologicalReaction direction="left-to-right" evidence="2">
        <dbReference type="Rhea" id="RHEA:64109"/>
    </physiologicalReaction>
    <physiologicalReaction direction="right-to-left" evidence="2">
        <dbReference type="Rhea" id="RHEA:64110"/>
    </physiologicalReaction>
</comment>
<comment type="catalytic activity">
    <reaction evidence="2">
        <text>N-hexadecanoyl-L-phenylalanine + H2O = hexadecanoate + L-phenylalanine</text>
        <dbReference type="Rhea" id="RHEA:64124"/>
        <dbReference type="ChEBI" id="CHEBI:7896"/>
        <dbReference type="ChEBI" id="CHEBI:15377"/>
        <dbReference type="ChEBI" id="CHEBI:58095"/>
        <dbReference type="ChEBI" id="CHEBI:149699"/>
    </reaction>
    <physiologicalReaction direction="left-to-right" evidence="2">
        <dbReference type="Rhea" id="RHEA:64125"/>
    </physiologicalReaction>
</comment>
<comment type="catalytic activity">
    <reaction evidence="2">
        <text>N-octadecanoyl-L-phenylalanine + H2O = octadecanoate + L-phenylalanine</text>
        <dbReference type="Rhea" id="RHEA:64128"/>
        <dbReference type="ChEBI" id="CHEBI:15377"/>
        <dbReference type="ChEBI" id="CHEBI:25629"/>
        <dbReference type="ChEBI" id="CHEBI:58095"/>
        <dbReference type="ChEBI" id="CHEBI:149700"/>
    </reaction>
    <physiologicalReaction direction="left-to-right" evidence="2">
        <dbReference type="Rhea" id="RHEA:64129"/>
    </physiologicalReaction>
</comment>
<comment type="catalytic activity">
    <reaction evidence="2">
        <text>N-(4Z,7Z,10Z,13Z,16Z,19Z-docosahexaenoyl)-L-phenylalanine + H2O = (4Z,7Z,10Z,13Z,16Z,19Z)-docosahexaenoate + L-phenylalanine</text>
        <dbReference type="Rhea" id="RHEA:64132"/>
        <dbReference type="ChEBI" id="CHEBI:15377"/>
        <dbReference type="ChEBI" id="CHEBI:58095"/>
        <dbReference type="ChEBI" id="CHEBI:77016"/>
        <dbReference type="ChEBI" id="CHEBI:149701"/>
    </reaction>
    <physiologicalReaction direction="left-to-right" evidence="2">
        <dbReference type="Rhea" id="RHEA:64133"/>
    </physiologicalReaction>
</comment>
<comment type="catalytic activity">
    <reaction evidence="2">
        <text>N-(9Z-octadecenoyl)-L-asparagine + H2O = L-asparagine + (9Z)-octadecenoate</text>
        <dbReference type="Rhea" id="RHEA:64136"/>
        <dbReference type="ChEBI" id="CHEBI:15377"/>
        <dbReference type="ChEBI" id="CHEBI:30823"/>
        <dbReference type="ChEBI" id="CHEBI:58048"/>
        <dbReference type="ChEBI" id="CHEBI:149730"/>
    </reaction>
    <physiologicalReaction direction="left-to-right" evidence="2">
        <dbReference type="Rhea" id="RHEA:64137"/>
    </physiologicalReaction>
</comment>
<comment type="catalytic activity">
    <reaction evidence="2">
        <text>(9Z)-octadecenoate + glycine = N-(9Z-octadecenoyl)glycine + H2O</text>
        <dbReference type="Rhea" id="RHEA:51316"/>
        <dbReference type="ChEBI" id="CHEBI:15377"/>
        <dbReference type="ChEBI" id="CHEBI:30823"/>
        <dbReference type="ChEBI" id="CHEBI:57305"/>
        <dbReference type="ChEBI" id="CHEBI:133992"/>
    </reaction>
    <physiologicalReaction direction="right-to-left" evidence="2">
        <dbReference type="Rhea" id="RHEA:51318"/>
    </physiologicalReaction>
</comment>
<comment type="catalytic activity">
    <reaction evidence="2">
        <text>N-(9Z-octadecenoyl)-L-lysine + H2O = L-lysine + (9Z)-octadecenoate</text>
        <dbReference type="Rhea" id="RHEA:64192"/>
        <dbReference type="ChEBI" id="CHEBI:15377"/>
        <dbReference type="ChEBI" id="CHEBI:30823"/>
        <dbReference type="ChEBI" id="CHEBI:32551"/>
        <dbReference type="ChEBI" id="CHEBI:149731"/>
    </reaction>
    <physiologicalReaction direction="left-to-right" evidence="2">
        <dbReference type="Rhea" id="RHEA:64193"/>
    </physiologicalReaction>
</comment>
<comment type="catalytic activity">
    <reaction evidence="2">
        <text>N-(9Z-octadecenoyl)-L-methionine + H2O = (9Z)-octadecenoate + L-methionine</text>
        <dbReference type="Rhea" id="RHEA:64144"/>
        <dbReference type="ChEBI" id="CHEBI:15377"/>
        <dbReference type="ChEBI" id="CHEBI:30823"/>
        <dbReference type="ChEBI" id="CHEBI:57844"/>
        <dbReference type="ChEBI" id="CHEBI:149732"/>
    </reaction>
    <physiologicalReaction direction="left-to-right" evidence="2">
        <dbReference type="Rhea" id="RHEA:64145"/>
    </physiologicalReaction>
</comment>
<comment type="catalytic activity">
    <reaction evidence="2">
        <text>N-(9Z-octadecenoyl)-L-serine + H2O = L-serine + (9Z)-octadecenoate</text>
        <dbReference type="Rhea" id="RHEA:51352"/>
        <dbReference type="ChEBI" id="CHEBI:15377"/>
        <dbReference type="ChEBI" id="CHEBI:30823"/>
        <dbReference type="ChEBI" id="CHEBI:33384"/>
        <dbReference type="ChEBI" id="CHEBI:134031"/>
    </reaction>
    <physiologicalReaction direction="left-to-right" evidence="2">
        <dbReference type="Rhea" id="RHEA:51353"/>
    </physiologicalReaction>
</comment>
<comment type="catalytic activity">
    <reaction evidence="2">
        <text>N-(9Z-octadecenoyl)-L-tryptophan + H2O = L-tryptophan + (9Z)-octadecenoate</text>
        <dbReference type="Rhea" id="RHEA:64176"/>
        <dbReference type="ChEBI" id="CHEBI:15377"/>
        <dbReference type="ChEBI" id="CHEBI:30823"/>
        <dbReference type="ChEBI" id="CHEBI:57912"/>
        <dbReference type="ChEBI" id="CHEBI:149733"/>
    </reaction>
    <physiologicalReaction direction="left-to-right" evidence="2">
        <dbReference type="Rhea" id="RHEA:64177"/>
    </physiologicalReaction>
</comment>
<comment type="catalytic activity">
    <reaction evidence="2">
        <text>N-(9Z-octadecenoyl)-L-tyrosine + H2O = L-tyrosine + (9Z)-octadecenoate</text>
        <dbReference type="Rhea" id="RHEA:64184"/>
        <dbReference type="ChEBI" id="CHEBI:15377"/>
        <dbReference type="ChEBI" id="CHEBI:30823"/>
        <dbReference type="ChEBI" id="CHEBI:58315"/>
        <dbReference type="ChEBI" id="CHEBI:149734"/>
    </reaction>
    <physiologicalReaction direction="left-to-right" evidence="2">
        <dbReference type="Rhea" id="RHEA:64185"/>
    </physiologicalReaction>
</comment>
<comment type="catalytic activity">
    <reaction evidence="2">
        <text>N-(9Z-octadecenoyl)-L-glutamine + H2O = L-glutamine + (9Z)-octadecenoate</text>
        <dbReference type="Rhea" id="RHEA:51356"/>
        <dbReference type="ChEBI" id="CHEBI:15377"/>
        <dbReference type="ChEBI" id="CHEBI:30823"/>
        <dbReference type="ChEBI" id="CHEBI:58359"/>
        <dbReference type="ChEBI" id="CHEBI:134033"/>
    </reaction>
    <physiologicalReaction direction="left-to-right" evidence="2">
        <dbReference type="Rhea" id="RHEA:51357"/>
    </physiologicalReaction>
</comment>
<comment type="catalytic activity">
    <reaction evidence="2">
        <text>N-(5Z,8Z,11Z,14Z-eicosatetraenoyl)-L-serine + H2O = (5Z,8Z,11Z,14Z)-eicosatetraenoate + L-serine</text>
        <dbReference type="Rhea" id="RHEA:64116"/>
        <dbReference type="ChEBI" id="CHEBI:15377"/>
        <dbReference type="ChEBI" id="CHEBI:32395"/>
        <dbReference type="ChEBI" id="CHEBI:33384"/>
        <dbReference type="ChEBI" id="CHEBI:149697"/>
    </reaction>
    <physiologicalReaction direction="left-to-right" evidence="2">
        <dbReference type="Rhea" id="RHEA:64117"/>
    </physiologicalReaction>
    <physiologicalReaction direction="right-to-left" evidence="2">
        <dbReference type="Rhea" id="RHEA:64118"/>
    </physiologicalReaction>
</comment>
<comment type="catalytic activity">
    <reaction evidence="2">
        <text>(5Z,8Z,11Z,14Z)-eicosatetraenoate + L-phenylalanine = N-(5Z,8Z,11Z,14Z-eicosatetraenoyl)-L-phenylalanine + H2O</text>
        <dbReference type="Rhea" id="RHEA:51312"/>
        <dbReference type="ChEBI" id="CHEBI:15377"/>
        <dbReference type="ChEBI" id="CHEBI:32395"/>
        <dbReference type="ChEBI" id="CHEBI:58095"/>
        <dbReference type="ChEBI" id="CHEBI:134022"/>
    </reaction>
    <physiologicalReaction direction="left-to-right" evidence="2">
        <dbReference type="Rhea" id="RHEA:51313"/>
    </physiologicalReaction>
    <physiologicalReaction direction="right-to-left" evidence="2">
        <dbReference type="Rhea" id="RHEA:51314"/>
    </physiologicalReaction>
</comment>
<comment type="cofactor">
    <cofactor evidence="1">
        <name>Zn(2+)</name>
        <dbReference type="ChEBI" id="CHEBI:29105"/>
    </cofactor>
    <text evidence="1">Binds 2 Zn(2+) ions per subunit.</text>
</comment>
<comment type="activity regulation">
    <text evidence="2">Lipoproteins are powerful coactivators of PM20D1 activity in vitro and NAA biosynthesis in vivo.</text>
</comment>
<comment type="pathway">
    <text evidence="6">Amino-acid metabolism.</text>
</comment>
<comment type="pathway">
    <text evidence="6">Energy metabolism.</text>
</comment>
<comment type="pathway">
    <text evidence="6">Lipid metabolism; fatty acid metabolism.</text>
</comment>
<comment type="subcellular location">
    <subcellularLocation>
        <location evidence="2">Secreted</location>
    </subcellularLocation>
</comment>
<comment type="alternative products">
    <event type="alternative splicing"/>
    <isoform>
        <id>Q6GTS8-1</id>
        <name>1</name>
        <sequence type="displayed"/>
    </isoform>
    <isoform>
        <id>Q6GTS8-2</id>
        <name>2</name>
        <sequence type="described" ref="VSP_031826 VSP_031827"/>
    </isoform>
</comment>
<comment type="miscellaneous">
    <text evidence="7">Genetically increasing or decreasing the expression of PM20D1 reduces and aggravates Alzheimer's disease (AD) related pathologies, respectively. These findings suggest that in a particular genetic background, PM20D1 contributes to neuroprotection against AD.</text>
</comment>
<comment type="similarity">
    <text evidence="9">Belongs to the peptidase M20A family.</text>
</comment>
<comment type="online information" name="Protein Spotlight">
    <link uri="https://www.proteinspotlight.org/back_issues/195/"/>
    <text>A touch of warmth - Issue 195 of September 2017</text>
</comment>
<reference key="1">
    <citation type="journal article" date="2004" name="Nat. Genet.">
        <title>Complete sequencing and characterization of 21,243 full-length human cDNAs.</title>
        <authorList>
            <person name="Ota T."/>
            <person name="Suzuki Y."/>
            <person name="Nishikawa T."/>
            <person name="Otsuki T."/>
            <person name="Sugiyama T."/>
            <person name="Irie R."/>
            <person name="Wakamatsu A."/>
            <person name="Hayashi K."/>
            <person name="Sato H."/>
            <person name="Nagai K."/>
            <person name="Kimura K."/>
            <person name="Makita H."/>
            <person name="Sekine M."/>
            <person name="Obayashi M."/>
            <person name="Nishi T."/>
            <person name="Shibahara T."/>
            <person name="Tanaka T."/>
            <person name="Ishii S."/>
            <person name="Yamamoto J."/>
            <person name="Saito K."/>
            <person name="Kawai Y."/>
            <person name="Isono Y."/>
            <person name="Nakamura Y."/>
            <person name="Nagahari K."/>
            <person name="Murakami K."/>
            <person name="Yasuda T."/>
            <person name="Iwayanagi T."/>
            <person name="Wagatsuma M."/>
            <person name="Shiratori A."/>
            <person name="Sudo H."/>
            <person name="Hosoiri T."/>
            <person name="Kaku Y."/>
            <person name="Kodaira H."/>
            <person name="Kondo H."/>
            <person name="Sugawara M."/>
            <person name="Takahashi M."/>
            <person name="Kanda K."/>
            <person name="Yokoi T."/>
            <person name="Furuya T."/>
            <person name="Kikkawa E."/>
            <person name="Omura Y."/>
            <person name="Abe K."/>
            <person name="Kamihara K."/>
            <person name="Katsuta N."/>
            <person name="Sato K."/>
            <person name="Tanikawa M."/>
            <person name="Yamazaki M."/>
            <person name="Ninomiya K."/>
            <person name="Ishibashi T."/>
            <person name="Yamashita H."/>
            <person name="Murakawa K."/>
            <person name="Fujimori K."/>
            <person name="Tanai H."/>
            <person name="Kimata M."/>
            <person name="Watanabe M."/>
            <person name="Hiraoka S."/>
            <person name="Chiba Y."/>
            <person name="Ishida S."/>
            <person name="Ono Y."/>
            <person name="Takiguchi S."/>
            <person name="Watanabe S."/>
            <person name="Yosida M."/>
            <person name="Hotuta T."/>
            <person name="Kusano J."/>
            <person name="Kanehori K."/>
            <person name="Takahashi-Fujii A."/>
            <person name="Hara H."/>
            <person name="Tanase T.-O."/>
            <person name="Nomura Y."/>
            <person name="Togiya S."/>
            <person name="Komai F."/>
            <person name="Hara R."/>
            <person name="Takeuchi K."/>
            <person name="Arita M."/>
            <person name="Imose N."/>
            <person name="Musashino K."/>
            <person name="Yuuki H."/>
            <person name="Oshima A."/>
            <person name="Sasaki N."/>
            <person name="Aotsuka S."/>
            <person name="Yoshikawa Y."/>
            <person name="Matsunawa H."/>
            <person name="Ichihara T."/>
            <person name="Shiohata N."/>
            <person name="Sano S."/>
            <person name="Moriya S."/>
            <person name="Momiyama H."/>
            <person name="Satoh N."/>
            <person name="Takami S."/>
            <person name="Terashima Y."/>
            <person name="Suzuki O."/>
            <person name="Nakagawa S."/>
            <person name="Senoh A."/>
            <person name="Mizoguchi H."/>
            <person name="Goto Y."/>
            <person name="Shimizu F."/>
            <person name="Wakebe H."/>
            <person name="Hishigaki H."/>
            <person name="Watanabe T."/>
            <person name="Sugiyama A."/>
            <person name="Takemoto M."/>
            <person name="Kawakami B."/>
            <person name="Yamazaki M."/>
            <person name="Watanabe K."/>
            <person name="Kumagai A."/>
            <person name="Itakura S."/>
            <person name="Fukuzumi Y."/>
            <person name="Fujimori Y."/>
            <person name="Komiyama M."/>
            <person name="Tashiro H."/>
            <person name="Tanigami A."/>
            <person name="Fujiwara T."/>
            <person name="Ono T."/>
            <person name="Yamada K."/>
            <person name="Fujii Y."/>
            <person name="Ozaki K."/>
            <person name="Hirao M."/>
            <person name="Ohmori Y."/>
            <person name="Kawabata A."/>
            <person name="Hikiji T."/>
            <person name="Kobatake N."/>
            <person name="Inagaki H."/>
            <person name="Ikema Y."/>
            <person name="Okamoto S."/>
            <person name="Okitani R."/>
            <person name="Kawakami T."/>
            <person name="Noguchi S."/>
            <person name="Itoh T."/>
            <person name="Shigeta K."/>
            <person name="Senba T."/>
            <person name="Matsumura K."/>
            <person name="Nakajima Y."/>
            <person name="Mizuno T."/>
            <person name="Morinaga M."/>
            <person name="Sasaki M."/>
            <person name="Togashi T."/>
            <person name="Oyama M."/>
            <person name="Hata H."/>
            <person name="Watanabe M."/>
            <person name="Komatsu T."/>
            <person name="Mizushima-Sugano J."/>
            <person name="Satoh T."/>
            <person name="Shirai Y."/>
            <person name="Takahashi Y."/>
            <person name="Nakagawa K."/>
            <person name="Okumura K."/>
            <person name="Nagase T."/>
            <person name="Nomura N."/>
            <person name="Kikuchi H."/>
            <person name="Masuho Y."/>
            <person name="Yamashita R."/>
            <person name="Nakai K."/>
            <person name="Yada T."/>
            <person name="Nakamura Y."/>
            <person name="Ohara O."/>
            <person name="Isogai T."/>
            <person name="Sugano S."/>
        </authorList>
    </citation>
    <scope>NUCLEOTIDE SEQUENCE [LARGE SCALE MRNA] (ISOFORMS 1 AND 2)</scope>
    <scope>VARIANTS VAL-149 AND TRP-153</scope>
    <source>
        <tissue>Kidney</tissue>
        <tissue>Spleen</tissue>
    </source>
</reference>
<reference key="2">
    <citation type="journal article" date="2006" name="Nature">
        <title>The DNA sequence and biological annotation of human chromosome 1.</title>
        <authorList>
            <person name="Gregory S.G."/>
            <person name="Barlow K.F."/>
            <person name="McLay K.E."/>
            <person name="Kaul R."/>
            <person name="Swarbreck D."/>
            <person name="Dunham A."/>
            <person name="Scott C.E."/>
            <person name="Howe K.L."/>
            <person name="Woodfine K."/>
            <person name="Spencer C.C.A."/>
            <person name="Jones M.C."/>
            <person name="Gillson C."/>
            <person name="Searle S."/>
            <person name="Zhou Y."/>
            <person name="Kokocinski F."/>
            <person name="McDonald L."/>
            <person name="Evans R."/>
            <person name="Phillips K."/>
            <person name="Atkinson A."/>
            <person name="Cooper R."/>
            <person name="Jones C."/>
            <person name="Hall R.E."/>
            <person name="Andrews T.D."/>
            <person name="Lloyd C."/>
            <person name="Ainscough R."/>
            <person name="Almeida J.P."/>
            <person name="Ambrose K.D."/>
            <person name="Anderson F."/>
            <person name="Andrew R.W."/>
            <person name="Ashwell R.I.S."/>
            <person name="Aubin K."/>
            <person name="Babbage A.K."/>
            <person name="Bagguley C.L."/>
            <person name="Bailey J."/>
            <person name="Beasley H."/>
            <person name="Bethel G."/>
            <person name="Bird C.P."/>
            <person name="Bray-Allen S."/>
            <person name="Brown J.Y."/>
            <person name="Brown A.J."/>
            <person name="Buckley D."/>
            <person name="Burton J."/>
            <person name="Bye J."/>
            <person name="Carder C."/>
            <person name="Chapman J.C."/>
            <person name="Clark S.Y."/>
            <person name="Clarke G."/>
            <person name="Clee C."/>
            <person name="Cobley V."/>
            <person name="Collier R.E."/>
            <person name="Corby N."/>
            <person name="Coville G.J."/>
            <person name="Davies J."/>
            <person name="Deadman R."/>
            <person name="Dunn M."/>
            <person name="Earthrowl M."/>
            <person name="Ellington A.G."/>
            <person name="Errington H."/>
            <person name="Frankish A."/>
            <person name="Frankland J."/>
            <person name="French L."/>
            <person name="Garner P."/>
            <person name="Garnett J."/>
            <person name="Gay L."/>
            <person name="Ghori M.R.J."/>
            <person name="Gibson R."/>
            <person name="Gilby L.M."/>
            <person name="Gillett W."/>
            <person name="Glithero R.J."/>
            <person name="Grafham D.V."/>
            <person name="Griffiths C."/>
            <person name="Griffiths-Jones S."/>
            <person name="Grocock R."/>
            <person name="Hammond S."/>
            <person name="Harrison E.S.I."/>
            <person name="Hart E."/>
            <person name="Haugen E."/>
            <person name="Heath P.D."/>
            <person name="Holmes S."/>
            <person name="Holt K."/>
            <person name="Howden P.J."/>
            <person name="Hunt A.R."/>
            <person name="Hunt S.E."/>
            <person name="Hunter G."/>
            <person name="Isherwood J."/>
            <person name="James R."/>
            <person name="Johnson C."/>
            <person name="Johnson D."/>
            <person name="Joy A."/>
            <person name="Kay M."/>
            <person name="Kershaw J.K."/>
            <person name="Kibukawa M."/>
            <person name="Kimberley A.M."/>
            <person name="King A."/>
            <person name="Knights A.J."/>
            <person name="Lad H."/>
            <person name="Laird G."/>
            <person name="Lawlor S."/>
            <person name="Leongamornlert D.A."/>
            <person name="Lloyd D.M."/>
            <person name="Loveland J."/>
            <person name="Lovell J."/>
            <person name="Lush M.J."/>
            <person name="Lyne R."/>
            <person name="Martin S."/>
            <person name="Mashreghi-Mohammadi M."/>
            <person name="Matthews L."/>
            <person name="Matthews N.S.W."/>
            <person name="McLaren S."/>
            <person name="Milne S."/>
            <person name="Mistry S."/>
            <person name="Moore M.J.F."/>
            <person name="Nickerson T."/>
            <person name="O'Dell C.N."/>
            <person name="Oliver K."/>
            <person name="Palmeiri A."/>
            <person name="Palmer S.A."/>
            <person name="Parker A."/>
            <person name="Patel D."/>
            <person name="Pearce A.V."/>
            <person name="Peck A.I."/>
            <person name="Pelan S."/>
            <person name="Phelps K."/>
            <person name="Phillimore B.J."/>
            <person name="Plumb R."/>
            <person name="Rajan J."/>
            <person name="Raymond C."/>
            <person name="Rouse G."/>
            <person name="Saenphimmachak C."/>
            <person name="Sehra H.K."/>
            <person name="Sheridan E."/>
            <person name="Shownkeen R."/>
            <person name="Sims S."/>
            <person name="Skuce C.D."/>
            <person name="Smith M."/>
            <person name="Steward C."/>
            <person name="Subramanian S."/>
            <person name="Sycamore N."/>
            <person name="Tracey A."/>
            <person name="Tromans A."/>
            <person name="Van Helmond Z."/>
            <person name="Wall M."/>
            <person name="Wallis J.M."/>
            <person name="White S."/>
            <person name="Whitehead S.L."/>
            <person name="Wilkinson J.E."/>
            <person name="Willey D.L."/>
            <person name="Williams H."/>
            <person name="Wilming L."/>
            <person name="Wray P.W."/>
            <person name="Wu Z."/>
            <person name="Coulson A."/>
            <person name="Vaudin M."/>
            <person name="Sulston J.E."/>
            <person name="Durbin R.M."/>
            <person name="Hubbard T."/>
            <person name="Wooster R."/>
            <person name="Dunham I."/>
            <person name="Carter N.P."/>
            <person name="McVean G."/>
            <person name="Ross M.T."/>
            <person name="Harrow J."/>
            <person name="Olson M.V."/>
            <person name="Beck S."/>
            <person name="Rogers J."/>
            <person name="Bentley D.R."/>
        </authorList>
    </citation>
    <scope>NUCLEOTIDE SEQUENCE [LARGE SCALE GENOMIC DNA]</scope>
</reference>
<reference key="3">
    <citation type="journal article" date="2004" name="Genome Res.">
        <title>The status, quality, and expansion of the NIH full-length cDNA project: the Mammalian Gene Collection (MGC).</title>
        <authorList>
            <consortium name="The MGC Project Team"/>
        </authorList>
    </citation>
    <scope>NUCLEOTIDE SEQUENCE [LARGE SCALE MRNA] (ISOFORM 1)</scope>
    <scope>VARIANTS TYR-33; VAL-149; TRP-153; THR-237; ARG-346 AND THR-380</scope>
    <source>
        <tissue>Pancreas</tissue>
        <tissue>Skin</tissue>
    </source>
</reference>
<reference key="4">
    <citation type="journal article" date="2016" name="Cell">
        <title>The secreted enzyme PM20D1 regulates lipidated amino acid uncouplers of mitochondria.</title>
        <authorList>
            <person name="Long J.Z."/>
            <person name="Svensson K.J."/>
            <person name="Bateman L.A."/>
            <person name="Lin H."/>
            <person name="Kamenecka T."/>
            <person name="Lokurkar I.A."/>
            <person name="Lou J."/>
            <person name="Rao R.R."/>
            <person name="Chang M.R."/>
            <person name="Jedrychowski M.P."/>
            <person name="Paulo J.A."/>
            <person name="Gygi S.P."/>
            <person name="Griffin P.R."/>
            <person name="Nomura D.K."/>
            <person name="Spiegelman B.M."/>
        </authorList>
    </citation>
    <scope>FUNCTION</scope>
    <scope>CATALYTIC ACTIVITY</scope>
    <scope>PATHWAY</scope>
</reference>
<reference key="5">
    <citation type="journal article" date="2018" name="Nat. Med.">
        <title>PM20D1 is a quantitative trait locus associated with Alzheimer's disease.</title>
        <authorList>
            <person name="Sanchez-Mut J.V."/>
            <person name="Heyn H."/>
            <person name="Silva B.A."/>
            <person name="Dixsaut L."/>
            <person name="Garcia-Esparcia P."/>
            <person name="Vidal E."/>
            <person name="Sayols S."/>
            <person name="Glauser L."/>
            <person name="Monteagudo-Sanchez A."/>
            <person name="Perez-Tur J."/>
            <person name="Ferrer I."/>
            <person name="Monk D."/>
            <person name="Schneider B."/>
            <person name="Esteller M."/>
            <person name="Graeff J."/>
        </authorList>
    </citation>
    <scope>MISCELLANEOUS</scope>
</reference>
<feature type="signal peptide" evidence="3">
    <location>
        <begin position="1"/>
        <end position="25"/>
    </location>
</feature>
<feature type="chain" id="PRO_0000321928" description="N-fatty-acyl-amino acid synthase/hydrolase PM20D1">
    <location>
        <begin position="26"/>
        <end position="502"/>
    </location>
</feature>
<feature type="active site" evidence="1">
    <location>
        <position position="127"/>
    </location>
</feature>
<feature type="active site" description="Proton acceptor" evidence="1">
    <location>
        <position position="191"/>
    </location>
</feature>
<feature type="binding site" evidence="1">
    <location>
        <position position="125"/>
    </location>
    <ligand>
        <name>Zn(2+)</name>
        <dbReference type="ChEBI" id="CHEBI:29105"/>
        <label>2</label>
    </ligand>
</feature>
<feature type="binding site" evidence="1">
    <location>
        <position position="157"/>
    </location>
    <ligand>
        <name>Zn(2+)</name>
        <dbReference type="ChEBI" id="CHEBI:29105"/>
        <label>1</label>
    </ligand>
</feature>
<feature type="binding site" evidence="1">
    <location>
        <position position="157"/>
    </location>
    <ligand>
        <name>Zn(2+)</name>
        <dbReference type="ChEBI" id="CHEBI:29105"/>
        <label>2</label>
    </ligand>
</feature>
<feature type="binding site" evidence="1">
    <location>
        <position position="192"/>
    </location>
    <ligand>
        <name>Zn(2+)</name>
        <dbReference type="ChEBI" id="CHEBI:29105"/>
        <label>1</label>
    </ligand>
</feature>
<feature type="binding site" evidence="1">
    <location>
        <position position="217"/>
    </location>
    <ligand>
        <name>Zn(2+)</name>
        <dbReference type="ChEBI" id="CHEBI:29105"/>
        <label>2</label>
    </ligand>
</feature>
<feature type="binding site" evidence="1">
    <location>
        <position position="464"/>
    </location>
    <ligand>
        <name>Zn(2+)</name>
        <dbReference type="ChEBI" id="CHEBI:29105"/>
        <label>1</label>
    </ligand>
</feature>
<feature type="glycosylation site" description="N-linked (GlcNAc...) asparagine" evidence="3">
    <location>
        <position position="252"/>
    </location>
</feature>
<feature type="splice variant" id="VSP_031826" description="In isoform 2." evidence="8">
    <original>FPFPVNIILSNPWLFEPLISRFMERNPLTNAIIRTTTALTIFKAGVKFNVIPPVAQATVN</original>
    <variation>VYGEKSLNQCNNQDHHGTHHIQSRGQVQCHPPSGPGHSQLPDSPWTDSPRGPRTHEEHCG</variation>
    <location>
        <begin position="302"/>
        <end position="361"/>
    </location>
</feature>
<feature type="splice variant" id="VSP_031827" description="In isoform 2." evidence="8">
    <location>
        <begin position="362"/>
        <end position="502"/>
    </location>
</feature>
<feature type="sequence variant" id="VAR_039380" description="In dbSNP:rs11540014." evidence="5">
    <original>H</original>
    <variation>Y</variation>
    <location>
        <position position="33"/>
    </location>
</feature>
<feature type="sequence variant" id="VAR_039381" description="In dbSNP:rs1891460." evidence="4 5">
    <original>I</original>
    <variation>V</variation>
    <location>
        <position position="149"/>
    </location>
</feature>
<feature type="sequence variant" id="VAR_039382" description="In dbSNP:rs1104899." evidence="4 5">
    <original>R</original>
    <variation>W</variation>
    <location>
        <position position="153"/>
    </location>
</feature>
<feature type="sequence variant" id="VAR_039383" description="In dbSNP:rs7518979." evidence="5">
    <original>I</original>
    <variation>T</variation>
    <location>
        <position position="237"/>
    </location>
</feature>
<feature type="sequence variant" id="VAR_039384" description="In dbSNP:rs11581214.">
    <original>S</original>
    <variation>C</variation>
    <location>
        <position position="258"/>
    </location>
</feature>
<feature type="sequence variant" id="VAR_039385" description="In dbSNP:rs11240573." evidence="5">
    <original>G</original>
    <variation>R</variation>
    <location>
        <position position="346"/>
    </location>
</feature>
<feature type="sequence variant" id="VAR_039386" description="In dbSNP:rs1361754." evidence="5">
    <original>I</original>
    <variation>T</variation>
    <location>
        <position position="380"/>
    </location>
</feature>
<feature type="sequence conflict" description="In Ref. 3; AAH39170." evidence="9" ref="3">
    <original>H</original>
    <variation>R</variation>
    <location>
        <position position="84"/>
    </location>
</feature>